<accession>O75884</accession>
<accession>D3DW31</accession>
<accession>Q5JPH9</accession>
<accession>Q9H1D8</accession>
<sequence>MASPSKAVIVPGNGGGDVTTHGWYGWVKKELEKIPGFQCLAKNMPDPITARESIWLPFMETELHCDEKTIIIGHSSGAIAAMRYAETHRVYAIVLVSAYTSDLGDENERASGYFTRPWQWEKIKANCPYIVQFGSTDDPFLPWKEQQEVADRLETKLHKFTDCGHFQNTEFHELITVVKSLLKVPA</sequence>
<proteinExistence type="evidence at protein level"/>
<protein>
    <recommendedName>
        <fullName evidence="7 8">Serine hydrolase RBBP9</fullName>
        <ecNumber evidence="5">3.1.-.-</ecNumber>
    </recommendedName>
    <alternativeName>
        <fullName evidence="1">B5T-overexpressed gene protein</fullName>
        <shortName evidence="1">Protein BOG</shortName>
    </alternativeName>
    <alternativeName>
        <fullName>Retinoblastoma-binding protein 10</fullName>
        <shortName>RBBP-10</shortName>
    </alternativeName>
    <alternativeName>
        <fullName>Retinoblastoma-binding protein 9</fullName>
        <shortName>RBBP-9</shortName>
    </alternativeName>
</protein>
<reference key="1">
    <citation type="journal article" date="1998" name="Nat. Genet.">
        <title>A retinoblastoma-binding protein that affects cell-cycle control and confers transforming ability.</title>
        <authorList>
            <person name="Woitach J.T."/>
            <person name="Zhang M."/>
            <person name="Niu C.-H."/>
            <person name="Thorgeirsson S.S."/>
        </authorList>
    </citation>
    <scope>NUCLEOTIDE SEQUENCE [MRNA] (ISOFORM 2)</scope>
    <scope>FUNCTION</scope>
    <scope>TISSUE SPECIFICITY</scope>
</reference>
<reference key="2">
    <citation type="journal article" date="2002" name="Biochem. Genet.">
        <title>Cloning and expression of a novel retinoblastoma binding protein cDNA, RBBP10.</title>
        <authorList>
            <person name="Chen J.-Z."/>
            <person name="Yang Q.-S."/>
            <person name="Wang S."/>
            <person name="Meng X.-F."/>
            <person name="Ying K."/>
            <person name="Xie Y."/>
            <person name="Mao Y.-M."/>
        </authorList>
    </citation>
    <scope>NUCLEOTIDE SEQUENCE [MRNA] (ISOFORM 1)</scope>
    <source>
        <tissue>Fetal brain</tissue>
    </source>
</reference>
<reference key="3">
    <citation type="journal article" date="2007" name="BMC Genomics">
        <title>The full-ORF clone resource of the German cDNA consortium.</title>
        <authorList>
            <person name="Bechtel S."/>
            <person name="Rosenfelder H."/>
            <person name="Duda A."/>
            <person name="Schmidt C.P."/>
            <person name="Ernst U."/>
            <person name="Wellenreuther R."/>
            <person name="Mehrle A."/>
            <person name="Schuster C."/>
            <person name="Bahr A."/>
            <person name="Bloecker H."/>
            <person name="Heubner D."/>
            <person name="Hoerlein A."/>
            <person name="Michel G."/>
            <person name="Wedler H."/>
            <person name="Koehrer K."/>
            <person name="Ottenwaelder B."/>
            <person name="Poustka A."/>
            <person name="Wiemann S."/>
            <person name="Schupp I."/>
        </authorList>
    </citation>
    <scope>NUCLEOTIDE SEQUENCE [LARGE SCALE MRNA] (ISOFORM 1)</scope>
    <source>
        <tissue>Lymph node</tissue>
    </source>
</reference>
<reference key="4">
    <citation type="journal article" date="2001" name="Nature">
        <title>The DNA sequence and comparative analysis of human chromosome 20.</title>
        <authorList>
            <person name="Deloukas P."/>
            <person name="Matthews L.H."/>
            <person name="Ashurst J.L."/>
            <person name="Burton J."/>
            <person name="Gilbert J.G.R."/>
            <person name="Jones M."/>
            <person name="Stavrides G."/>
            <person name="Almeida J.P."/>
            <person name="Babbage A.K."/>
            <person name="Bagguley C.L."/>
            <person name="Bailey J."/>
            <person name="Barlow K.F."/>
            <person name="Bates K.N."/>
            <person name="Beard L.M."/>
            <person name="Beare D.M."/>
            <person name="Beasley O.P."/>
            <person name="Bird C.P."/>
            <person name="Blakey S.E."/>
            <person name="Bridgeman A.M."/>
            <person name="Brown A.J."/>
            <person name="Buck D."/>
            <person name="Burrill W.D."/>
            <person name="Butler A.P."/>
            <person name="Carder C."/>
            <person name="Carter N.P."/>
            <person name="Chapman J.C."/>
            <person name="Clamp M."/>
            <person name="Clark G."/>
            <person name="Clark L.N."/>
            <person name="Clark S.Y."/>
            <person name="Clee C.M."/>
            <person name="Clegg S."/>
            <person name="Cobley V.E."/>
            <person name="Collier R.E."/>
            <person name="Connor R.E."/>
            <person name="Corby N.R."/>
            <person name="Coulson A."/>
            <person name="Coville G.J."/>
            <person name="Deadman R."/>
            <person name="Dhami P.D."/>
            <person name="Dunn M."/>
            <person name="Ellington A.G."/>
            <person name="Frankland J.A."/>
            <person name="Fraser A."/>
            <person name="French L."/>
            <person name="Garner P."/>
            <person name="Grafham D.V."/>
            <person name="Griffiths C."/>
            <person name="Griffiths M.N.D."/>
            <person name="Gwilliam R."/>
            <person name="Hall R.E."/>
            <person name="Hammond S."/>
            <person name="Harley J.L."/>
            <person name="Heath P.D."/>
            <person name="Ho S."/>
            <person name="Holden J.L."/>
            <person name="Howden P.J."/>
            <person name="Huckle E."/>
            <person name="Hunt A.R."/>
            <person name="Hunt S.E."/>
            <person name="Jekosch K."/>
            <person name="Johnson C.M."/>
            <person name="Johnson D."/>
            <person name="Kay M.P."/>
            <person name="Kimberley A.M."/>
            <person name="King A."/>
            <person name="Knights A."/>
            <person name="Laird G.K."/>
            <person name="Lawlor S."/>
            <person name="Lehvaeslaiho M.H."/>
            <person name="Leversha M.A."/>
            <person name="Lloyd C."/>
            <person name="Lloyd D.M."/>
            <person name="Lovell J.D."/>
            <person name="Marsh V.L."/>
            <person name="Martin S.L."/>
            <person name="McConnachie L.J."/>
            <person name="McLay K."/>
            <person name="McMurray A.A."/>
            <person name="Milne S.A."/>
            <person name="Mistry D."/>
            <person name="Moore M.J.F."/>
            <person name="Mullikin J.C."/>
            <person name="Nickerson T."/>
            <person name="Oliver K."/>
            <person name="Parker A."/>
            <person name="Patel R."/>
            <person name="Pearce T.A.V."/>
            <person name="Peck A.I."/>
            <person name="Phillimore B.J.C.T."/>
            <person name="Prathalingam S.R."/>
            <person name="Plumb R.W."/>
            <person name="Ramsay H."/>
            <person name="Rice C.M."/>
            <person name="Ross M.T."/>
            <person name="Scott C.E."/>
            <person name="Sehra H.K."/>
            <person name="Shownkeen R."/>
            <person name="Sims S."/>
            <person name="Skuce C.D."/>
            <person name="Smith M.L."/>
            <person name="Soderlund C."/>
            <person name="Steward C.A."/>
            <person name="Sulston J.E."/>
            <person name="Swann R.M."/>
            <person name="Sycamore N."/>
            <person name="Taylor R."/>
            <person name="Tee L."/>
            <person name="Thomas D.W."/>
            <person name="Thorpe A."/>
            <person name="Tracey A."/>
            <person name="Tromans A.C."/>
            <person name="Vaudin M."/>
            <person name="Wall M."/>
            <person name="Wallis J.M."/>
            <person name="Whitehead S.L."/>
            <person name="Whittaker P."/>
            <person name="Willey D.L."/>
            <person name="Williams L."/>
            <person name="Williams S.A."/>
            <person name="Wilming L."/>
            <person name="Wray P.W."/>
            <person name="Hubbard T."/>
            <person name="Durbin R.M."/>
            <person name="Bentley D.R."/>
            <person name="Beck S."/>
            <person name="Rogers J."/>
        </authorList>
    </citation>
    <scope>NUCLEOTIDE SEQUENCE [LARGE SCALE GENOMIC DNA] (ISOFORM 1)</scope>
</reference>
<reference key="5">
    <citation type="submission" date="2005-09" db="EMBL/GenBank/DDBJ databases">
        <authorList>
            <person name="Mural R.J."/>
            <person name="Istrail S."/>
            <person name="Sutton G.G."/>
            <person name="Florea L."/>
            <person name="Halpern A.L."/>
            <person name="Mobarry C.M."/>
            <person name="Lippert R."/>
            <person name="Walenz B."/>
            <person name="Shatkay H."/>
            <person name="Dew I."/>
            <person name="Miller J.R."/>
            <person name="Flanigan M.J."/>
            <person name="Edwards N.J."/>
            <person name="Bolanos R."/>
            <person name="Fasulo D."/>
            <person name="Halldorsson B.V."/>
            <person name="Hannenhalli S."/>
            <person name="Turner R."/>
            <person name="Yooseph S."/>
            <person name="Lu F."/>
            <person name="Nusskern D.R."/>
            <person name="Shue B.C."/>
            <person name="Zheng X.H."/>
            <person name="Zhong F."/>
            <person name="Delcher A.L."/>
            <person name="Huson D.H."/>
            <person name="Kravitz S.A."/>
            <person name="Mouchard L."/>
            <person name="Reinert K."/>
            <person name="Remington K.A."/>
            <person name="Clark A.G."/>
            <person name="Waterman M.S."/>
            <person name="Eichler E.E."/>
            <person name="Adams M.D."/>
            <person name="Hunkapiller M.W."/>
            <person name="Myers E.W."/>
            <person name="Venter J.C."/>
        </authorList>
    </citation>
    <scope>NUCLEOTIDE SEQUENCE [LARGE SCALE GENOMIC DNA]</scope>
</reference>
<reference key="6">
    <citation type="journal article" date="2004" name="Genome Res.">
        <title>The status, quality, and expansion of the NIH full-length cDNA project: the Mammalian Gene Collection (MGC).</title>
        <authorList>
            <consortium name="The MGC Project Team"/>
        </authorList>
    </citation>
    <scope>NUCLEOTIDE SEQUENCE [LARGE SCALE MRNA] (ISOFORM 1)</scope>
    <source>
        <tissue>Skin</tissue>
    </source>
</reference>
<reference key="7">
    <citation type="journal article" date="2009" name="Nat. Biotechnol.">
        <title>Identification of selective inhibitors of uncharacterized enzymes by high-throughput screening with fluorescent activity-based probes.</title>
        <authorList>
            <person name="Bachovchin D.A."/>
            <person name="Brown S.J."/>
            <person name="Rosen H."/>
            <person name="Cravatt B.F."/>
        </authorList>
    </citation>
    <scope>FUNCTION</scope>
    <scope>ACTIVITY REGULATION</scope>
    <scope>ACTIVE SITE</scope>
    <scope>MUTAGENESIS OF SER-75</scope>
</reference>
<reference key="8">
    <citation type="journal article" date="2010" name="Proc. Natl. Acad. Sci. U.S.A.">
        <title>RBBP9: a tumor-associated serine hydrolase activity required for pancreatic neoplasia.</title>
        <authorList>
            <person name="Shields D.J."/>
            <person name="Niessen S."/>
            <person name="Murphy E.A."/>
            <person name="Mielgo A."/>
            <person name="Desgrosellier J.S."/>
            <person name="Lau S.K."/>
            <person name="Barnes L.A."/>
            <person name="Lesperance J."/>
            <person name="Bouvet M."/>
            <person name="Tarin D."/>
            <person name="Cravatt B.F."/>
            <person name="Cheresh D.A."/>
        </authorList>
    </citation>
    <scope>FUNCTION</scope>
    <scope>TISSUE SPECIFICITY</scope>
    <scope>MUTAGENESIS OF SER-75</scope>
</reference>
<reference key="9">
    <citation type="journal article" date="2011" name="BMC Syst. Biol.">
        <title>Initial characterization of the human central proteome.</title>
        <authorList>
            <person name="Burkard T.R."/>
            <person name="Planyavsky M."/>
            <person name="Kaupe I."/>
            <person name="Breitwieser F.P."/>
            <person name="Buerckstuemmer T."/>
            <person name="Bennett K.L."/>
            <person name="Superti-Furga G."/>
            <person name="Colinge J."/>
        </authorList>
    </citation>
    <scope>IDENTIFICATION BY MASS SPECTROMETRY [LARGE SCALE ANALYSIS]</scope>
</reference>
<reference key="10">
    <citation type="journal article" date="2011" name="Exp. Hematol.">
        <title>Retinoblastoma-binding proteins 4 and 9 are important for human pluripotent stem cell maintenance.</title>
        <authorList>
            <person name="O'Connor M.D."/>
            <person name="Wederell E."/>
            <person name="Robertson G."/>
            <person name="Delaney A."/>
            <person name="Morozova O."/>
            <person name="Poon S.S."/>
            <person name="Yap D."/>
            <person name="Fee J."/>
            <person name="Zhao Y."/>
            <person name="McDonald H."/>
            <person name="Zeng T."/>
            <person name="Hirst M."/>
            <person name="Marra M.A."/>
            <person name="Aparicio S.A."/>
            <person name="Eaves C.J."/>
        </authorList>
    </citation>
    <scope>INTERACTION WITH RB1</scope>
</reference>
<reference key="11">
    <citation type="journal article" date="2014" name="J. Proteomics">
        <title>An enzyme assisted RP-RPLC approach for in-depth analysis of human liver phosphoproteome.</title>
        <authorList>
            <person name="Bian Y."/>
            <person name="Song C."/>
            <person name="Cheng K."/>
            <person name="Dong M."/>
            <person name="Wang F."/>
            <person name="Huang J."/>
            <person name="Sun D."/>
            <person name="Wang L."/>
            <person name="Ye M."/>
            <person name="Zou H."/>
        </authorList>
    </citation>
    <scope>IDENTIFICATION BY MASS SPECTROMETRY [LARGE SCALE ANALYSIS]</scope>
    <source>
        <tissue>Liver</tissue>
    </source>
</reference>
<reference key="12">
    <citation type="journal article" date="2009" name="Proteins">
        <title>Crystal structure of human retinoblastoma binding protein 9.</title>
        <authorList>
            <person name="Vorobiev S.M."/>
            <person name="Su M."/>
            <person name="Seetharaman J."/>
            <person name="Huang Y.J."/>
            <person name="Chen C.X."/>
            <person name="Maglaqui M."/>
            <person name="Janjua H."/>
            <person name="Proudfoot M."/>
            <person name="Yakunin A."/>
            <person name="Xiao R."/>
            <person name="Acton T.B."/>
            <person name="Montelione G.T."/>
            <person name="Tong L."/>
        </authorList>
    </citation>
    <scope>X-RAY CRYSTALLOGRAPHY (1.72 ANGSTROMS)</scope>
    <scope>ACTIVE SITE</scope>
</reference>
<reference key="13">
    <citation type="journal article" date="2020" name="Mol. Pharm.">
        <title>Chemoproteomic Identification of Serine Hydrolase RBBP9 as a Valacyclovir-Activating Enzyme.</title>
        <authorList>
            <person name="Shenoy V.M."/>
            <person name="Thompson B.R."/>
            <person name="Shi J."/>
            <person name="Zhu H.J."/>
            <person name="Smith D.E."/>
            <person name="Amidon G.L."/>
        </authorList>
    </citation>
    <scope>FUNCTION</scope>
    <scope>CATALYTIC ACTIVITY</scope>
    <scope>BIOPHYSICOCHEMICAL PROPERTIES</scope>
</reference>
<dbReference type="EC" id="3.1.-.-" evidence="5"/>
<dbReference type="EMBL" id="AF039564">
    <property type="protein sequence ID" value="AAC63498.1"/>
    <property type="molecule type" value="mRNA"/>
</dbReference>
<dbReference type="EMBL" id="AF237576">
    <property type="protein sequence ID" value="AAL83721.1"/>
    <property type="molecule type" value="mRNA"/>
</dbReference>
<dbReference type="EMBL" id="AL832411">
    <property type="protein sequence ID" value="CAI46193.1"/>
    <property type="molecule type" value="mRNA"/>
</dbReference>
<dbReference type="EMBL" id="AL121893">
    <property type="status" value="NOT_ANNOTATED_CDS"/>
    <property type="molecule type" value="Genomic_DNA"/>
</dbReference>
<dbReference type="EMBL" id="CH471133">
    <property type="protein sequence ID" value="EAX10236.1"/>
    <property type="molecule type" value="Genomic_DNA"/>
</dbReference>
<dbReference type="EMBL" id="CH471133">
    <property type="protein sequence ID" value="EAX10237.1"/>
    <property type="molecule type" value="Genomic_DNA"/>
</dbReference>
<dbReference type="EMBL" id="CH471133">
    <property type="protein sequence ID" value="EAX10238.1"/>
    <property type="molecule type" value="Genomic_DNA"/>
</dbReference>
<dbReference type="EMBL" id="BC015938">
    <property type="protein sequence ID" value="AAH15938.1"/>
    <property type="molecule type" value="mRNA"/>
</dbReference>
<dbReference type="CCDS" id="CCDS13136.1">
    <molecule id="O75884-1"/>
</dbReference>
<dbReference type="RefSeq" id="NP_006597.2">
    <molecule id="O75884-1"/>
    <property type="nucleotide sequence ID" value="NM_006606.2"/>
</dbReference>
<dbReference type="PDB" id="2QS9">
    <property type="method" value="X-ray"/>
    <property type="resolution" value="1.72 A"/>
    <property type="chains" value="A/B=1-186"/>
</dbReference>
<dbReference type="PDB" id="7OEX">
    <property type="method" value="X-ray"/>
    <property type="resolution" value="1.51 A"/>
    <property type="chains" value="A/B=1-186"/>
</dbReference>
<dbReference type="PDB" id="9FCR">
    <property type="method" value="X-ray"/>
    <property type="resolution" value="1.37 A"/>
    <property type="chains" value="A/B=1-186"/>
</dbReference>
<dbReference type="PDBsum" id="2QS9"/>
<dbReference type="PDBsum" id="7OEX"/>
<dbReference type="PDBsum" id="9FCR"/>
<dbReference type="SMR" id="O75884"/>
<dbReference type="BioGRID" id="115964">
    <property type="interactions" value="13"/>
</dbReference>
<dbReference type="FunCoup" id="O75884">
    <property type="interactions" value="684"/>
</dbReference>
<dbReference type="IntAct" id="O75884">
    <property type="interactions" value="3"/>
</dbReference>
<dbReference type="STRING" id="9606.ENSP00000336866"/>
<dbReference type="BindingDB" id="O75884"/>
<dbReference type="ChEMBL" id="CHEMBL1075121"/>
<dbReference type="DrugCentral" id="O75884"/>
<dbReference type="GuidetoPHARMACOLOGY" id="2874"/>
<dbReference type="ESTHER" id="human-RBBP9">
    <property type="family name" value="Hydrolase_RBBP9_YdeN"/>
</dbReference>
<dbReference type="iPTMnet" id="O75884"/>
<dbReference type="PhosphoSitePlus" id="O75884"/>
<dbReference type="BioMuta" id="RBBP9"/>
<dbReference type="jPOST" id="O75884"/>
<dbReference type="MassIVE" id="O75884"/>
<dbReference type="PaxDb" id="9606-ENSP00000336866"/>
<dbReference type="PeptideAtlas" id="O75884"/>
<dbReference type="ProteomicsDB" id="50241">
    <molecule id="O75884-1"/>
</dbReference>
<dbReference type="ProteomicsDB" id="50242">
    <molecule id="O75884-2"/>
</dbReference>
<dbReference type="Pumba" id="O75884"/>
<dbReference type="Antibodypedia" id="9405">
    <property type="antibodies" value="328 antibodies from 28 providers"/>
</dbReference>
<dbReference type="DNASU" id="10741"/>
<dbReference type="Ensembl" id="ENST00000337227.9">
    <molecule id="O75884-1"/>
    <property type="protein sequence ID" value="ENSP00000336866.4"/>
    <property type="gene ID" value="ENSG00000089050.16"/>
</dbReference>
<dbReference type="GeneID" id="10741"/>
<dbReference type="KEGG" id="hsa:10741"/>
<dbReference type="MANE-Select" id="ENST00000337227.9">
    <property type="protein sequence ID" value="ENSP00000336866.4"/>
    <property type="RefSeq nucleotide sequence ID" value="NM_006606.3"/>
    <property type="RefSeq protein sequence ID" value="NP_006597.2"/>
</dbReference>
<dbReference type="UCSC" id="uc002wqy.5">
    <molecule id="O75884-1"/>
    <property type="organism name" value="human"/>
</dbReference>
<dbReference type="AGR" id="HGNC:9892"/>
<dbReference type="CTD" id="10741"/>
<dbReference type="DisGeNET" id="10741"/>
<dbReference type="GeneCards" id="RBBP9"/>
<dbReference type="HGNC" id="HGNC:9892">
    <property type="gene designation" value="RBBP9"/>
</dbReference>
<dbReference type="HPA" id="ENSG00000089050">
    <property type="expression patterns" value="Low tissue specificity"/>
</dbReference>
<dbReference type="MIM" id="602908">
    <property type="type" value="gene"/>
</dbReference>
<dbReference type="neXtProt" id="NX_O75884"/>
<dbReference type="OpenTargets" id="ENSG00000089050"/>
<dbReference type="PharmGKB" id="PA34256"/>
<dbReference type="VEuPathDB" id="HostDB:ENSG00000089050"/>
<dbReference type="eggNOG" id="ENOG502QVNM">
    <property type="taxonomic scope" value="Eukaryota"/>
</dbReference>
<dbReference type="GeneTree" id="ENSGT00390000014861"/>
<dbReference type="HOGENOM" id="CLU_088863_1_0_1"/>
<dbReference type="InParanoid" id="O75884"/>
<dbReference type="OMA" id="NRPWEWE"/>
<dbReference type="OrthoDB" id="2369073at2759"/>
<dbReference type="PAN-GO" id="O75884">
    <property type="GO annotations" value="0 GO annotations based on evolutionary models"/>
</dbReference>
<dbReference type="PhylomeDB" id="O75884"/>
<dbReference type="TreeFam" id="TF106470"/>
<dbReference type="PathwayCommons" id="O75884"/>
<dbReference type="SignaLink" id="O75884"/>
<dbReference type="BioGRID-ORCS" id="10741">
    <property type="hits" value="6 hits in 1151 CRISPR screens"/>
</dbReference>
<dbReference type="CD-CODE" id="232F8A39">
    <property type="entry name" value="P-body"/>
</dbReference>
<dbReference type="ChiTaRS" id="RBBP9">
    <property type="organism name" value="human"/>
</dbReference>
<dbReference type="EvolutionaryTrace" id="O75884"/>
<dbReference type="GeneWiki" id="RBBP9"/>
<dbReference type="GenomeRNAi" id="10741"/>
<dbReference type="Pharos" id="O75884">
    <property type="development level" value="Tchem"/>
</dbReference>
<dbReference type="PRO" id="PR:O75884"/>
<dbReference type="Proteomes" id="UP000005640">
    <property type="component" value="Chromosome 20"/>
</dbReference>
<dbReference type="RNAct" id="O75884">
    <property type="molecule type" value="protein"/>
</dbReference>
<dbReference type="Bgee" id="ENSG00000089050">
    <property type="expression patterns" value="Expressed in pigmented layer of retina and 181 other cell types or tissues"/>
</dbReference>
<dbReference type="GO" id="GO:0005654">
    <property type="term" value="C:nucleoplasm"/>
    <property type="evidence" value="ECO:0000314"/>
    <property type="project" value="HPA"/>
</dbReference>
<dbReference type="GO" id="GO:0017171">
    <property type="term" value="F:serine hydrolase activity"/>
    <property type="evidence" value="ECO:0000314"/>
    <property type="project" value="UniProtKB"/>
</dbReference>
<dbReference type="GO" id="GO:0010628">
    <property type="term" value="P:positive regulation of gene expression"/>
    <property type="evidence" value="ECO:0007669"/>
    <property type="project" value="Ensembl"/>
</dbReference>
<dbReference type="GO" id="GO:0009624">
    <property type="term" value="P:response to nematode"/>
    <property type="evidence" value="ECO:0007669"/>
    <property type="project" value="Ensembl"/>
</dbReference>
<dbReference type="GO" id="GO:0060510">
    <property type="term" value="P:type II pneumocyte differentiation"/>
    <property type="evidence" value="ECO:0007669"/>
    <property type="project" value="Ensembl"/>
</dbReference>
<dbReference type="GO" id="GO:0006805">
    <property type="term" value="P:xenobiotic metabolic process"/>
    <property type="evidence" value="ECO:0000314"/>
    <property type="project" value="UniProtKB"/>
</dbReference>
<dbReference type="FunFam" id="3.40.50.1820:FF:000113">
    <property type="entry name" value="Putative hydrolase RBBP9"/>
    <property type="match status" value="1"/>
</dbReference>
<dbReference type="Gene3D" id="3.40.50.1820">
    <property type="entry name" value="alpha/beta hydrolase"/>
    <property type="match status" value="1"/>
</dbReference>
<dbReference type="InterPro" id="IPR029058">
    <property type="entry name" value="AB_hydrolase_fold"/>
</dbReference>
<dbReference type="InterPro" id="IPR010662">
    <property type="entry name" value="Hydrolase_RBBP9/YdeN"/>
</dbReference>
<dbReference type="InterPro" id="IPR052581">
    <property type="entry name" value="RBBP9"/>
</dbReference>
<dbReference type="PANTHER" id="PTHR15394">
    <property type="entry name" value="SERINE HYDROLASE RBBP9"/>
    <property type="match status" value="1"/>
</dbReference>
<dbReference type="PANTHER" id="PTHR15394:SF3">
    <property type="entry name" value="SERINE HYDROLASE RBBP9"/>
    <property type="match status" value="1"/>
</dbReference>
<dbReference type="Pfam" id="PF06821">
    <property type="entry name" value="Ser_hydrolase"/>
    <property type="match status" value="1"/>
</dbReference>
<dbReference type="SUPFAM" id="SSF53474">
    <property type="entry name" value="alpha/beta-Hydrolases"/>
    <property type="match status" value="1"/>
</dbReference>
<keyword id="KW-0002">3D-structure</keyword>
<keyword id="KW-0025">Alternative splicing</keyword>
<keyword id="KW-0378">Hydrolase</keyword>
<keyword id="KW-1267">Proteomics identification</keyword>
<keyword id="KW-1185">Reference proteome</keyword>
<evidence type="ECO:0000250" key="1">
    <source>
        <dbReference type="UniProtKB" id="O88350"/>
    </source>
</evidence>
<evidence type="ECO:0000269" key="2">
    <source>
    </source>
</evidence>
<evidence type="ECO:0000269" key="3">
    <source>
    </source>
</evidence>
<evidence type="ECO:0000269" key="4">
    <source>
    </source>
</evidence>
<evidence type="ECO:0000269" key="5">
    <source>
    </source>
</evidence>
<evidence type="ECO:0000269" key="6">
    <source>
    </source>
</evidence>
<evidence type="ECO:0000303" key="7">
    <source>
    </source>
</evidence>
<evidence type="ECO:0000303" key="8">
    <source>
    </source>
</evidence>
<evidence type="ECO:0000303" key="9">
    <source>
    </source>
</evidence>
<evidence type="ECO:0000305" key="10"/>
<evidence type="ECO:0000305" key="11">
    <source>
    </source>
</evidence>
<evidence type="ECO:0000305" key="12">
    <source>
    </source>
</evidence>
<evidence type="ECO:0000305" key="13">
    <source>
    </source>
</evidence>
<evidence type="ECO:0000305" key="14">
    <source>
    </source>
</evidence>
<evidence type="ECO:0000305" key="15">
    <source>
    </source>
</evidence>
<evidence type="ECO:0000312" key="16">
    <source>
        <dbReference type="HGNC" id="HGNC:9892"/>
    </source>
</evidence>
<evidence type="ECO:0007829" key="17">
    <source>
        <dbReference type="PDB" id="7OEX"/>
    </source>
</evidence>
<organism>
    <name type="scientific">Homo sapiens</name>
    <name type="common">Human</name>
    <dbReference type="NCBI Taxonomy" id="9606"/>
    <lineage>
        <taxon>Eukaryota</taxon>
        <taxon>Metazoa</taxon>
        <taxon>Chordata</taxon>
        <taxon>Craniata</taxon>
        <taxon>Vertebrata</taxon>
        <taxon>Euteleostomi</taxon>
        <taxon>Mammalia</taxon>
        <taxon>Eutheria</taxon>
        <taxon>Euarchontoglires</taxon>
        <taxon>Primates</taxon>
        <taxon>Haplorrhini</taxon>
        <taxon>Catarrhini</taxon>
        <taxon>Hominidae</taxon>
        <taxon>Homo</taxon>
    </lineage>
</organism>
<gene>
    <name evidence="16" type="primary">RBBP9</name>
    <name type="synonym">BOG</name>
    <name type="synonym">RBBP10</name>
</gene>
<name>RBBP9_HUMAN</name>
<feature type="chain" id="PRO_0000097180" description="Serine hydrolase RBBP9">
    <location>
        <begin position="1"/>
        <end position="186"/>
    </location>
</feature>
<feature type="region of interest" description="Involved in binding to RB1" evidence="15">
    <location>
        <begin position="63"/>
        <end position="67"/>
    </location>
</feature>
<feature type="active site" description="Charge relay system" evidence="11 12">
    <location>
        <position position="75"/>
    </location>
</feature>
<feature type="active site" description="Charge relay system" evidence="11">
    <location>
        <position position="138"/>
    </location>
</feature>
<feature type="active site" description="Charge relay system" evidence="11">
    <location>
        <position position="165"/>
    </location>
</feature>
<feature type="splice variant" id="VSP_004374" description="In isoform 2." evidence="9">
    <original>RLETKLHKFTDCGHFQNTEFHELITVVKSLLKVPA</original>
    <variation>SWTPNCTNSLTVVTFRTQSSMN</variation>
    <location>
        <begin position="152"/>
        <end position="186"/>
    </location>
</feature>
<feature type="mutagenesis site" description="Loss of serine hydrolase activity. Fails to block TGF-beta-mediated anti-proliferative signal in tumor cells." evidence="2 3">
    <original>S</original>
    <variation>A</variation>
    <location>
        <position position="75"/>
    </location>
</feature>
<feature type="sequence conflict" description="In Ref. 1; AAC63498." evidence="10" ref="1">
    <original>A</original>
    <variation>V</variation>
    <location>
        <position position="2"/>
    </location>
</feature>
<feature type="sequence conflict" description="In Ref. 1; AAC63498." evidence="10" ref="1">
    <original>NG</original>
    <variation>KI</variation>
    <location>
        <begin position="13"/>
        <end position="14"/>
    </location>
</feature>
<feature type="sequence conflict" description="In Ref. 1; AAC63498." evidence="10" ref="1">
    <original>V</original>
    <variation>E</variation>
    <location>
        <position position="18"/>
    </location>
</feature>
<feature type="sequence conflict" description="In Ref. 1; AAC63498." evidence="10" ref="1">
    <original>IV</original>
    <variation>LI</variation>
    <location>
        <begin position="93"/>
        <end position="94"/>
    </location>
</feature>
<feature type="sequence conflict" description="In Ref. 1; AAC63498." evidence="10" ref="1">
    <original>DL</original>
    <variation>EF</variation>
    <location>
        <begin position="102"/>
        <end position="103"/>
    </location>
</feature>
<feature type="sequence conflict" description="In Ref. 1; AAC63498." evidence="10" ref="1">
    <original>T</original>
    <variation>S</variation>
    <location>
        <position position="115"/>
    </location>
</feature>
<feature type="sequence conflict" description="In Ref. 1; AAC63498." evidence="10" ref="1">
    <original>Y</original>
    <variation>H</variation>
    <location>
        <position position="129"/>
    </location>
</feature>
<feature type="strand" evidence="17">
    <location>
        <begin position="6"/>
        <end position="10"/>
    </location>
</feature>
<feature type="strand" evidence="17">
    <location>
        <begin position="13"/>
        <end position="15"/>
    </location>
</feature>
<feature type="turn" evidence="17">
    <location>
        <begin position="18"/>
        <end position="20"/>
    </location>
</feature>
<feature type="helix" evidence="17">
    <location>
        <begin position="24"/>
        <end position="32"/>
    </location>
</feature>
<feature type="strand" evidence="17">
    <location>
        <begin position="38"/>
        <end position="41"/>
    </location>
</feature>
<feature type="turn" evidence="17">
    <location>
        <begin position="47"/>
        <end position="49"/>
    </location>
</feature>
<feature type="helix" evidence="17">
    <location>
        <begin position="52"/>
        <end position="61"/>
    </location>
</feature>
<feature type="strand" evidence="17">
    <location>
        <begin position="69"/>
        <end position="74"/>
    </location>
</feature>
<feature type="helix" evidence="17">
    <location>
        <begin position="76"/>
        <end position="87"/>
    </location>
</feature>
<feature type="strand" evidence="17">
    <location>
        <begin position="91"/>
        <end position="97"/>
    </location>
</feature>
<feature type="helix" evidence="17">
    <location>
        <begin position="106"/>
        <end position="110"/>
    </location>
</feature>
<feature type="helix" evidence="17">
    <location>
        <begin position="120"/>
        <end position="126"/>
    </location>
</feature>
<feature type="strand" evidence="17">
    <location>
        <begin position="128"/>
        <end position="135"/>
    </location>
</feature>
<feature type="strand" evidence="17">
    <location>
        <begin position="139"/>
        <end position="141"/>
    </location>
</feature>
<feature type="helix" evidence="17">
    <location>
        <begin position="143"/>
        <end position="153"/>
    </location>
</feature>
<feature type="strand" evidence="17">
    <location>
        <begin position="156"/>
        <end position="162"/>
    </location>
</feature>
<feature type="turn" evidence="17">
    <location>
        <begin position="164"/>
        <end position="166"/>
    </location>
</feature>
<feature type="helix" evidence="17">
    <location>
        <begin position="172"/>
        <end position="181"/>
    </location>
</feature>
<comment type="function">
    <text evidence="2 3 5 6 12 13">Serine hydrolase (Probable) (PubMed:32196348). Catalyzes the hydrolytic activation of amino acid ester of the antiviral prodrug valacyclovir to its corresponding active drug, acyclovir (PubMed:32196348). May negatively regulate basal or autocrine TGF-beta signaling by suppressing SMAD2-SMAD3 phosphorylation (PubMed:20080647). May play a role in the transformation process due to its capacity to confer resistance to the growth-inhibitory effects of TGF-beta through interaction with RB1 and the subsequent displacement of E2F1 (PubMed:9697699).</text>
</comment>
<comment type="catalytic activity">
    <reaction evidence="5">
        <text>valacyclovir + H2O = acyclovir + L-valine + H(+)</text>
        <dbReference type="Rhea" id="RHEA:83871"/>
        <dbReference type="ChEBI" id="CHEBI:2453"/>
        <dbReference type="ChEBI" id="CHEBI:15377"/>
        <dbReference type="ChEBI" id="CHEBI:15378"/>
        <dbReference type="ChEBI" id="CHEBI:57762"/>
        <dbReference type="ChEBI" id="CHEBI:233453"/>
    </reaction>
    <physiologicalReaction direction="left-to-right" evidence="14">
        <dbReference type="Rhea" id="RHEA:83872"/>
    </physiologicalReaction>
</comment>
<comment type="activity regulation">
    <text evidence="2">Inhibited by the natural product emetine produced by the ipecac root.</text>
</comment>
<comment type="biophysicochemical properties">
    <kinetics>
        <KM evidence="5">1.9 mM for valacyclovir</KM>
        <text evidence="5">kcat is 193 sec(-1) with valacyclovir as substrate.</text>
    </kinetics>
</comment>
<comment type="subunit">
    <text evidence="1 4">Interacts with RB1; the interaction disrupts RB1 binding to E2F1 (PubMed:21689726). Interacts with RBL1 and RBL2 (By similarity).</text>
</comment>
<comment type="interaction">
    <interactant intactId="EBI-11310604">
        <id>O75884</id>
    </interactant>
    <interactant intactId="EBI-742404">
        <id>O95199</id>
        <label>RCBTB2</label>
    </interactant>
    <organismsDiffer>false</organismsDiffer>
    <experiments>3</experiments>
</comment>
<comment type="interaction">
    <interactant intactId="EBI-11310604">
        <id>O75884</id>
    </interactant>
    <interactant intactId="EBI-750109">
        <id>Q9NYB0</id>
        <label>TERF2IP</label>
    </interactant>
    <organismsDiffer>false</organismsDiffer>
    <experiments>2</experiments>
</comment>
<comment type="alternative products">
    <event type="alternative splicing"/>
    <isoform>
        <id>O75884-1</id>
        <name>1</name>
        <sequence type="displayed"/>
    </isoform>
    <isoform>
        <id>O75884-2</id>
        <name>2</name>
        <sequence type="described" ref="VSP_004374"/>
    </isoform>
</comment>
<comment type="tissue specificity">
    <text evidence="3 6">Expressed at higher levels in tumor tissues such as carcinoma.</text>
</comment>
<comment type="miscellaneous">
    <text evidence="4">Plays a role in maintaining pluripotency in human stem cells in vitro.</text>
</comment>
<comment type="similarity">
    <text evidence="10">Belongs to the RBBP9 family.</text>
</comment>